<dbReference type="EC" id="6.1.1.16" evidence="1"/>
<dbReference type="EMBL" id="CP000538">
    <property type="protein sequence ID" value="EAQ72366.1"/>
    <property type="molecule type" value="Genomic_DNA"/>
</dbReference>
<dbReference type="RefSeq" id="WP_002867954.1">
    <property type="nucleotide sequence ID" value="NC_008787.1"/>
</dbReference>
<dbReference type="SMR" id="A1VZF0"/>
<dbReference type="KEGG" id="cjj:CJJ81176_0823"/>
<dbReference type="eggNOG" id="COG0215">
    <property type="taxonomic scope" value="Bacteria"/>
</dbReference>
<dbReference type="HOGENOM" id="CLU_013528_0_1_7"/>
<dbReference type="Proteomes" id="UP000000646">
    <property type="component" value="Chromosome"/>
</dbReference>
<dbReference type="GO" id="GO:0005829">
    <property type="term" value="C:cytosol"/>
    <property type="evidence" value="ECO:0007669"/>
    <property type="project" value="TreeGrafter"/>
</dbReference>
<dbReference type="GO" id="GO:0005524">
    <property type="term" value="F:ATP binding"/>
    <property type="evidence" value="ECO:0007669"/>
    <property type="project" value="UniProtKB-UniRule"/>
</dbReference>
<dbReference type="GO" id="GO:0004817">
    <property type="term" value="F:cysteine-tRNA ligase activity"/>
    <property type="evidence" value="ECO:0007669"/>
    <property type="project" value="UniProtKB-UniRule"/>
</dbReference>
<dbReference type="GO" id="GO:0008270">
    <property type="term" value="F:zinc ion binding"/>
    <property type="evidence" value="ECO:0007669"/>
    <property type="project" value="UniProtKB-UniRule"/>
</dbReference>
<dbReference type="GO" id="GO:0006423">
    <property type="term" value="P:cysteinyl-tRNA aminoacylation"/>
    <property type="evidence" value="ECO:0007669"/>
    <property type="project" value="UniProtKB-UniRule"/>
</dbReference>
<dbReference type="CDD" id="cd00672">
    <property type="entry name" value="CysRS_core"/>
    <property type="match status" value="1"/>
</dbReference>
<dbReference type="Gene3D" id="1.20.120.1910">
    <property type="entry name" value="Cysteine-tRNA ligase, C-terminal anti-codon recognition domain"/>
    <property type="match status" value="1"/>
</dbReference>
<dbReference type="Gene3D" id="3.40.50.620">
    <property type="entry name" value="HUPs"/>
    <property type="match status" value="1"/>
</dbReference>
<dbReference type="HAMAP" id="MF_00041">
    <property type="entry name" value="Cys_tRNA_synth"/>
    <property type="match status" value="1"/>
</dbReference>
<dbReference type="InterPro" id="IPR015803">
    <property type="entry name" value="Cys-tRNA-ligase"/>
</dbReference>
<dbReference type="InterPro" id="IPR015273">
    <property type="entry name" value="Cys-tRNA-synt_Ia_DALR"/>
</dbReference>
<dbReference type="InterPro" id="IPR024909">
    <property type="entry name" value="Cys-tRNA/MSH_ligase"/>
</dbReference>
<dbReference type="InterPro" id="IPR014729">
    <property type="entry name" value="Rossmann-like_a/b/a_fold"/>
</dbReference>
<dbReference type="InterPro" id="IPR032678">
    <property type="entry name" value="tRNA-synt_1_cat_dom"/>
</dbReference>
<dbReference type="InterPro" id="IPR009080">
    <property type="entry name" value="tRNAsynth_Ia_anticodon-bd"/>
</dbReference>
<dbReference type="NCBIfam" id="TIGR00435">
    <property type="entry name" value="cysS"/>
    <property type="match status" value="1"/>
</dbReference>
<dbReference type="PANTHER" id="PTHR10890:SF3">
    <property type="entry name" value="CYSTEINE--TRNA LIGASE, CYTOPLASMIC"/>
    <property type="match status" value="1"/>
</dbReference>
<dbReference type="PANTHER" id="PTHR10890">
    <property type="entry name" value="CYSTEINYL-TRNA SYNTHETASE"/>
    <property type="match status" value="1"/>
</dbReference>
<dbReference type="Pfam" id="PF09190">
    <property type="entry name" value="DALR_2"/>
    <property type="match status" value="1"/>
</dbReference>
<dbReference type="Pfam" id="PF01406">
    <property type="entry name" value="tRNA-synt_1e"/>
    <property type="match status" value="1"/>
</dbReference>
<dbReference type="PRINTS" id="PR00983">
    <property type="entry name" value="TRNASYNTHCYS"/>
</dbReference>
<dbReference type="SMART" id="SM00840">
    <property type="entry name" value="DALR_2"/>
    <property type="match status" value="1"/>
</dbReference>
<dbReference type="SUPFAM" id="SSF47323">
    <property type="entry name" value="Anticodon-binding domain of a subclass of class I aminoacyl-tRNA synthetases"/>
    <property type="match status" value="1"/>
</dbReference>
<dbReference type="SUPFAM" id="SSF52374">
    <property type="entry name" value="Nucleotidylyl transferase"/>
    <property type="match status" value="1"/>
</dbReference>
<reference key="1">
    <citation type="submission" date="2006-12" db="EMBL/GenBank/DDBJ databases">
        <authorList>
            <person name="Fouts D.E."/>
            <person name="Nelson K.E."/>
            <person name="Sebastian Y."/>
        </authorList>
    </citation>
    <scope>NUCLEOTIDE SEQUENCE [LARGE SCALE GENOMIC DNA]</scope>
    <source>
        <strain>81-176</strain>
    </source>
</reference>
<name>SYC_CAMJJ</name>
<gene>
    <name evidence="1" type="primary">cysS</name>
    <name type="ordered locus">CJJ81176_0823</name>
</gene>
<organism>
    <name type="scientific">Campylobacter jejuni subsp. jejuni serotype O:23/36 (strain 81-176)</name>
    <dbReference type="NCBI Taxonomy" id="354242"/>
    <lineage>
        <taxon>Bacteria</taxon>
        <taxon>Pseudomonadati</taxon>
        <taxon>Campylobacterota</taxon>
        <taxon>Epsilonproteobacteria</taxon>
        <taxon>Campylobacterales</taxon>
        <taxon>Campylobacteraceae</taxon>
        <taxon>Campylobacter</taxon>
    </lineage>
</organism>
<sequence length="462" mass="53644">MRLLDSVTKEKIKLDKKDISIYLCGPTVYDDAHLGHARSSVCFDLLRRVLLAQGNRVKFARNYTDIDDKILKKMTQSGQTLEEITEFYIKSYEEDMRALNVLDPDFKPRATHYITAMLDLIKKLAKDGFVYTLEDGIYFDTSKDEKYLSLSNRNLEENISRLSNEVQKRNESDFVLWKFDENFYENEFGKGRPGWHTECVAMIDSIFENTLDIHAGGIDLLFPHHENEAAQCRCGCKRKLANIWLHNGFVKIDGEKMSKSLNNSFFIKDALKEFMGEALRFYLLSSHYRSHFNYSLSDLENAKKRLDKFYRLKKRLDLGEISDFDVLNDIEIKSEIAKQILEILNDDLNVSKALALLDDFISSANLELDKESKNKILKQNIKEALSELAKIFGFGFMDTTLYFQWGVSKEEREEIEKLILERTEAKKNKDFNTADAIREQLNSKKITLLDTPNGTIWEKINA</sequence>
<evidence type="ECO:0000255" key="1">
    <source>
        <dbReference type="HAMAP-Rule" id="MF_00041"/>
    </source>
</evidence>
<keyword id="KW-0030">Aminoacyl-tRNA synthetase</keyword>
<keyword id="KW-0067">ATP-binding</keyword>
<keyword id="KW-0963">Cytoplasm</keyword>
<keyword id="KW-0436">Ligase</keyword>
<keyword id="KW-0479">Metal-binding</keyword>
<keyword id="KW-0547">Nucleotide-binding</keyword>
<keyword id="KW-0648">Protein biosynthesis</keyword>
<keyword id="KW-0862">Zinc</keyword>
<protein>
    <recommendedName>
        <fullName evidence="1">Cysteine--tRNA ligase</fullName>
        <ecNumber evidence="1">6.1.1.16</ecNumber>
    </recommendedName>
    <alternativeName>
        <fullName evidence="1">Cysteinyl-tRNA synthetase</fullName>
        <shortName evidence="1">CysRS</shortName>
    </alternativeName>
</protein>
<feature type="chain" id="PRO_1000006580" description="Cysteine--tRNA ligase">
    <location>
        <begin position="1"/>
        <end position="462"/>
    </location>
</feature>
<feature type="short sequence motif" description="'HIGH' region">
    <location>
        <begin position="26"/>
        <end position="36"/>
    </location>
</feature>
<feature type="short sequence motif" description="'KMSKS' region">
    <location>
        <begin position="256"/>
        <end position="260"/>
    </location>
</feature>
<feature type="binding site" evidence="1">
    <location>
        <position position="24"/>
    </location>
    <ligand>
        <name>Zn(2+)</name>
        <dbReference type="ChEBI" id="CHEBI:29105"/>
    </ligand>
</feature>
<feature type="binding site" evidence="1">
    <location>
        <position position="199"/>
    </location>
    <ligand>
        <name>Zn(2+)</name>
        <dbReference type="ChEBI" id="CHEBI:29105"/>
    </ligand>
</feature>
<feature type="binding site" evidence="1">
    <location>
        <position position="224"/>
    </location>
    <ligand>
        <name>Zn(2+)</name>
        <dbReference type="ChEBI" id="CHEBI:29105"/>
    </ligand>
</feature>
<feature type="binding site" evidence="1">
    <location>
        <position position="228"/>
    </location>
    <ligand>
        <name>Zn(2+)</name>
        <dbReference type="ChEBI" id="CHEBI:29105"/>
    </ligand>
</feature>
<feature type="binding site" evidence="1">
    <location>
        <position position="259"/>
    </location>
    <ligand>
        <name>ATP</name>
        <dbReference type="ChEBI" id="CHEBI:30616"/>
    </ligand>
</feature>
<proteinExistence type="inferred from homology"/>
<comment type="catalytic activity">
    <reaction evidence="1">
        <text>tRNA(Cys) + L-cysteine + ATP = L-cysteinyl-tRNA(Cys) + AMP + diphosphate</text>
        <dbReference type="Rhea" id="RHEA:17773"/>
        <dbReference type="Rhea" id="RHEA-COMP:9661"/>
        <dbReference type="Rhea" id="RHEA-COMP:9679"/>
        <dbReference type="ChEBI" id="CHEBI:30616"/>
        <dbReference type="ChEBI" id="CHEBI:33019"/>
        <dbReference type="ChEBI" id="CHEBI:35235"/>
        <dbReference type="ChEBI" id="CHEBI:78442"/>
        <dbReference type="ChEBI" id="CHEBI:78517"/>
        <dbReference type="ChEBI" id="CHEBI:456215"/>
        <dbReference type="EC" id="6.1.1.16"/>
    </reaction>
</comment>
<comment type="cofactor">
    <cofactor evidence="1">
        <name>Zn(2+)</name>
        <dbReference type="ChEBI" id="CHEBI:29105"/>
    </cofactor>
    <text evidence="1">Binds 1 zinc ion per subunit.</text>
</comment>
<comment type="subunit">
    <text evidence="1">Monomer.</text>
</comment>
<comment type="subcellular location">
    <subcellularLocation>
        <location evidence="1">Cytoplasm</location>
    </subcellularLocation>
</comment>
<comment type="similarity">
    <text evidence="1">Belongs to the class-I aminoacyl-tRNA synthetase family.</text>
</comment>
<accession>A1VZF0</accession>